<accession>Q1GRI6</accession>
<protein>
    <recommendedName>
        <fullName evidence="1">Transcription antitermination protein NusB</fullName>
    </recommendedName>
    <alternativeName>
        <fullName evidence="1">Antitermination factor NusB</fullName>
    </alternativeName>
</protein>
<proteinExistence type="inferred from homology"/>
<sequence>MNKRAQSRSAARLAAVQALYQHEMEATPVAQLIHEFHQHRIGAIIEDAEYADADVPFFDDIVKGVLARADEIDAAITARLASGWTMERLDRTMKAILRAGTYELIARGDVPVGAVVSEYVDVAKAFFDGREAGFANGLLDAIGKDVRKK</sequence>
<dbReference type="EMBL" id="CP000356">
    <property type="protein sequence ID" value="ABF53736.1"/>
    <property type="molecule type" value="Genomic_DNA"/>
</dbReference>
<dbReference type="RefSeq" id="WP_011542312.1">
    <property type="nucleotide sequence ID" value="NC_008048.1"/>
</dbReference>
<dbReference type="SMR" id="Q1GRI6"/>
<dbReference type="STRING" id="317655.Sala_2025"/>
<dbReference type="KEGG" id="sal:Sala_2025"/>
<dbReference type="eggNOG" id="COG0781">
    <property type="taxonomic scope" value="Bacteria"/>
</dbReference>
<dbReference type="HOGENOM" id="CLU_087843_4_0_5"/>
<dbReference type="OrthoDB" id="9797817at2"/>
<dbReference type="Proteomes" id="UP000006578">
    <property type="component" value="Chromosome"/>
</dbReference>
<dbReference type="GO" id="GO:0005829">
    <property type="term" value="C:cytosol"/>
    <property type="evidence" value="ECO:0007669"/>
    <property type="project" value="TreeGrafter"/>
</dbReference>
<dbReference type="GO" id="GO:0003723">
    <property type="term" value="F:RNA binding"/>
    <property type="evidence" value="ECO:0007669"/>
    <property type="project" value="UniProtKB-UniRule"/>
</dbReference>
<dbReference type="GO" id="GO:0006353">
    <property type="term" value="P:DNA-templated transcription termination"/>
    <property type="evidence" value="ECO:0007669"/>
    <property type="project" value="UniProtKB-UniRule"/>
</dbReference>
<dbReference type="GO" id="GO:0031564">
    <property type="term" value="P:transcription antitermination"/>
    <property type="evidence" value="ECO:0007669"/>
    <property type="project" value="UniProtKB-KW"/>
</dbReference>
<dbReference type="Gene3D" id="1.10.940.10">
    <property type="entry name" value="NusB-like"/>
    <property type="match status" value="1"/>
</dbReference>
<dbReference type="HAMAP" id="MF_00073">
    <property type="entry name" value="NusB"/>
    <property type="match status" value="1"/>
</dbReference>
<dbReference type="InterPro" id="IPR035926">
    <property type="entry name" value="NusB-like_sf"/>
</dbReference>
<dbReference type="InterPro" id="IPR011605">
    <property type="entry name" value="NusB_fam"/>
</dbReference>
<dbReference type="InterPro" id="IPR006027">
    <property type="entry name" value="NusB_RsmB_TIM44"/>
</dbReference>
<dbReference type="NCBIfam" id="TIGR01951">
    <property type="entry name" value="nusB"/>
    <property type="match status" value="1"/>
</dbReference>
<dbReference type="PANTHER" id="PTHR11078:SF3">
    <property type="entry name" value="ANTITERMINATION NUSB DOMAIN-CONTAINING PROTEIN"/>
    <property type="match status" value="1"/>
</dbReference>
<dbReference type="PANTHER" id="PTHR11078">
    <property type="entry name" value="N UTILIZATION SUBSTANCE PROTEIN B-RELATED"/>
    <property type="match status" value="1"/>
</dbReference>
<dbReference type="Pfam" id="PF01029">
    <property type="entry name" value="NusB"/>
    <property type="match status" value="1"/>
</dbReference>
<dbReference type="SUPFAM" id="SSF48013">
    <property type="entry name" value="NusB-like"/>
    <property type="match status" value="1"/>
</dbReference>
<comment type="function">
    <text evidence="1">Involved in transcription antitermination. Required for transcription of ribosomal RNA (rRNA) genes. Binds specifically to the boxA antiterminator sequence of the ribosomal RNA (rrn) operons.</text>
</comment>
<comment type="similarity">
    <text evidence="1">Belongs to the NusB family.</text>
</comment>
<reference key="1">
    <citation type="journal article" date="2009" name="Proc. Natl. Acad. Sci. U.S.A.">
        <title>The genomic basis of trophic strategy in marine bacteria.</title>
        <authorList>
            <person name="Lauro F.M."/>
            <person name="McDougald D."/>
            <person name="Thomas T."/>
            <person name="Williams T.J."/>
            <person name="Egan S."/>
            <person name="Rice S."/>
            <person name="DeMaere M.Z."/>
            <person name="Ting L."/>
            <person name="Ertan H."/>
            <person name="Johnson J."/>
            <person name="Ferriera S."/>
            <person name="Lapidus A."/>
            <person name="Anderson I."/>
            <person name="Kyrpides N."/>
            <person name="Munk A.C."/>
            <person name="Detter C."/>
            <person name="Han C.S."/>
            <person name="Brown M.V."/>
            <person name="Robb F.T."/>
            <person name="Kjelleberg S."/>
            <person name="Cavicchioli R."/>
        </authorList>
    </citation>
    <scope>NUCLEOTIDE SEQUENCE [LARGE SCALE GENOMIC DNA]</scope>
    <source>
        <strain>DSM 13593 / LMG 18877 / RB2256</strain>
    </source>
</reference>
<gene>
    <name evidence="1" type="primary">nusB</name>
    <name type="ordered locus">Sala_2025</name>
</gene>
<evidence type="ECO:0000255" key="1">
    <source>
        <dbReference type="HAMAP-Rule" id="MF_00073"/>
    </source>
</evidence>
<keyword id="KW-1185">Reference proteome</keyword>
<keyword id="KW-0694">RNA-binding</keyword>
<keyword id="KW-0804">Transcription</keyword>
<keyword id="KW-0889">Transcription antitermination</keyword>
<keyword id="KW-0805">Transcription regulation</keyword>
<feature type="chain" id="PRO_0000265596" description="Transcription antitermination protein NusB">
    <location>
        <begin position="1"/>
        <end position="149"/>
    </location>
</feature>
<organism>
    <name type="scientific">Sphingopyxis alaskensis (strain DSM 13593 / LMG 18877 / RB2256)</name>
    <name type="common">Sphingomonas alaskensis</name>
    <dbReference type="NCBI Taxonomy" id="317655"/>
    <lineage>
        <taxon>Bacteria</taxon>
        <taxon>Pseudomonadati</taxon>
        <taxon>Pseudomonadota</taxon>
        <taxon>Alphaproteobacteria</taxon>
        <taxon>Sphingomonadales</taxon>
        <taxon>Sphingomonadaceae</taxon>
        <taxon>Sphingopyxis</taxon>
    </lineage>
</organism>
<name>NUSB_SPHAL</name>